<gene>
    <name evidence="1" type="primary">rph</name>
    <name type="ordered locus">FTL_0357</name>
</gene>
<feature type="chain" id="PRO_1000024808" description="Ribonuclease PH">
    <location>
        <begin position="1"/>
        <end position="235"/>
    </location>
</feature>
<feature type="binding site" evidence="1">
    <location>
        <position position="86"/>
    </location>
    <ligand>
        <name>phosphate</name>
        <dbReference type="ChEBI" id="CHEBI:43474"/>
        <note>substrate</note>
    </ligand>
</feature>
<feature type="binding site" evidence="1">
    <location>
        <begin position="124"/>
        <end position="126"/>
    </location>
    <ligand>
        <name>phosphate</name>
        <dbReference type="ChEBI" id="CHEBI:43474"/>
        <note>substrate</note>
    </ligand>
</feature>
<evidence type="ECO:0000255" key="1">
    <source>
        <dbReference type="HAMAP-Rule" id="MF_00564"/>
    </source>
</evidence>
<dbReference type="EC" id="2.7.7.56" evidence="1"/>
<dbReference type="EMBL" id="AM233362">
    <property type="protein sequence ID" value="CAJ78797.1"/>
    <property type="molecule type" value="Genomic_DNA"/>
</dbReference>
<dbReference type="RefSeq" id="WP_003014543.1">
    <property type="nucleotide sequence ID" value="NZ_CP009694.1"/>
</dbReference>
<dbReference type="SMR" id="Q2A562"/>
<dbReference type="KEGG" id="ftl:FTL_0357"/>
<dbReference type="Proteomes" id="UP000001944">
    <property type="component" value="Chromosome"/>
</dbReference>
<dbReference type="GO" id="GO:0000175">
    <property type="term" value="F:3'-5'-RNA exonuclease activity"/>
    <property type="evidence" value="ECO:0007669"/>
    <property type="project" value="UniProtKB-UniRule"/>
</dbReference>
<dbReference type="GO" id="GO:0000049">
    <property type="term" value="F:tRNA binding"/>
    <property type="evidence" value="ECO:0007669"/>
    <property type="project" value="UniProtKB-UniRule"/>
</dbReference>
<dbReference type="GO" id="GO:0009022">
    <property type="term" value="F:tRNA nucleotidyltransferase activity"/>
    <property type="evidence" value="ECO:0007669"/>
    <property type="project" value="UniProtKB-UniRule"/>
</dbReference>
<dbReference type="GO" id="GO:0016075">
    <property type="term" value="P:rRNA catabolic process"/>
    <property type="evidence" value="ECO:0007669"/>
    <property type="project" value="UniProtKB-UniRule"/>
</dbReference>
<dbReference type="GO" id="GO:0006364">
    <property type="term" value="P:rRNA processing"/>
    <property type="evidence" value="ECO:0007669"/>
    <property type="project" value="UniProtKB-KW"/>
</dbReference>
<dbReference type="GO" id="GO:0008033">
    <property type="term" value="P:tRNA processing"/>
    <property type="evidence" value="ECO:0007669"/>
    <property type="project" value="UniProtKB-UniRule"/>
</dbReference>
<dbReference type="CDD" id="cd11362">
    <property type="entry name" value="RNase_PH_bact"/>
    <property type="match status" value="1"/>
</dbReference>
<dbReference type="FunFam" id="3.30.230.70:FF:000003">
    <property type="entry name" value="Ribonuclease PH"/>
    <property type="match status" value="1"/>
</dbReference>
<dbReference type="Gene3D" id="3.30.230.70">
    <property type="entry name" value="GHMP Kinase, N-terminal domain"/>
    <property type="match status" value="1"/>
</dbReference>
<dbReference type="HAMAP" id="MF_00564">
    <property type="entry name" value="RNase_PH"/>
    <property type="match status" value="1"/>
</dbReference>
<dbReference type="InterPro" id="IPR001247">
    <property type="entry name" value="ExoRNase_PH_dom1"/>
</dbReference>
<dbReference type="InterPro" id="IPR015847">
    <property type="entry name" value="ExoRNase_PH_dom2"/>
</dbReference>
<dbReference type="InterPro" id="IPR036345">
    <property type="entry name" value="ExoRNase_PH_dom2_sf"/>
</dbReference>
<dbReference type="InterPro" id="IPR027408">
    <property type="entry name" value="PNPase/RNase_PH_dom_sf"/>
</dbReference>
<dbReference type="InterPro" id="IPR020568">
    <property type="entry name" value="Ribosomal_Su5_D2-typ_SF"/>
</dbReference>
<dbReference type="InterPro" id="IPR050080">
    <property type="entry name" value="RNase_PH"/>
</dbReference>
<dbReference type="InterPro" id="IPR002381">
    <property type="entry name" value="RNase_PH_bac-type"/>
</dbReference>
<dbReference type="InterPro" id="IPR018336">
    <property type="entry name" value="RNase_PH_CS"/>
</dbReference>
<dbReference type="NCBIfam" id="TIGR01966">
    <property type="entry name" value="RNasePH"/>
    <property type="match status" value="1"/>
</dbReference>
<dbReference type="PANTHER" id="PTHR11953">
    <property type="entry name" value="EXOSOME COMPLEX COMPONENT"/>
    <property type="match status" value="1"/>
</dbReference>
<dbReference type="PANTHER" id="PTHR11953:SF0">
    <property type="entry name" value="EXOSOME COMPLEX COMPONENT RRP41"/>
    <property type="match status" value="1"/>
</dbReference>
<dbReference type="Pfam" id="PF01138">
    <property type="entry name" value="RNase_PH"/>
    <property type="match status" value="1"/>
</dbReference>
<dbReference type="Pfam" id="PF03725">
    <property type="entry name" value="RNase_PH_C"/>
    <property type="match status" value="1"/>
</dbReference>
<dbReference type="SUPFAM" id="SSF55666">
    <property type="entry name" value="Ribonuclease PH domain 2-like"/>
    <property type="match status" value="1"/>
</dbReference>
<dbReference type="SUPFAM" id="SSF54211">
    <property type="entry name" value="Ribosomal protein S5 domain 2-like"/>
    <property type="match status" value="1"/>
</dbReference>
<dbReference type="PROSITE" id="PS01277">
    <property type="entry name" value="RIBONUCLEASE_PH"/>
    <property type="match status" value="1"/>
</dbReference>
<organism>
    <name type="scientific">Francisella tularensis subsp. holarctica (strain LVS)</name>
    <dbReference type="NCBI Taxonomy" id="376619"/>
    <lineage>
        <taxon>Bacteria</taxon>
        <taxon>Pseudomonadati</taxon>
        <taxon>Pseudomonadota</taxon>
        <taxon>Gammaproteobacteria</taxon>
        <taxon>Thiotrichales</taxon>
        <taxon>Francisellaceae</taxon>
        <taxon>Francisella</taxon>
    </lineage>
</organism>
<reference key="1">
    <citation type="submission" date="2006-03" db="EMBL/GenBank/DDBJ databases">
        <title>Complete genome sequence of Francisella tularensis LVS (Live Vaccine Strain).</title>
        <authorList>
            <person name="Chain P."/>
            <person name="Larimer F."/>
            <person name="Land M."/>
            <person name="Stilwagen S."/>
            <person name="Larsson P."/>
            <person name="Bearden S."/>
            <person name="Chu M."/>
            <person name="Oyston P."/>
            <person name="Forsman M."/>
            <person name="Andersson S."/>
            <person name="Lindler L."/>
            <person name="Titball R."/>
            <person name="Garcia E."/>
        </authorList>
    </citation>
    <scope>NUCLEOTIDE SEQUENCE [LARGE SCALE GENOMIC DNA]</scope>
    <source>
        <strain>LVS</strain>
    </source>
</reference>
<protein>
    <recommendedName>
        <fullName evidence="1">Ribonuclease PH</fullName>
        <shortName evidence="1">RNase PH</shortName>
        <ecNumber evidence="1">2.7.7.56</ecNumber>
    </recommendedName>
    <alternativeName>
        <fullName evidence="1">tRNA nucleotidyltransferase</fullName>
    </alternativeName>
</protein>
<name>RNPH_FRATH</name>
<sequence>MRPSGRNNDQLRNLKVTHNFTKHAEGSVLIEFGDTKVICTASVVAGVPKFKKDSGEGWLTAEYGMLPRSTHTRMDREAARGKQSGRTQEIQRLIGRALRASVDLTAIGENTIKVDCDVIQADGGTRTASITGASLAIADAIEYMKQNGILDEQANPLLSQVAAISVGIYNNEPVLDLDYDEDSNAETDMNVVMNSNGGIIEIQGTAEGKDFSEEEFAKMLGLAKKGIKEIFATVF</sequence>
<keyword id="KW-0548">Nucleotidyltransferase</keyword>
<keyword id="KW-1185">Reference proteome</keyword>
<keyword id="KW-0694">RNA-binding</keyword>
<keyword id="KW-0698">rRNA processing</keyword>
<keyword id="KW-0808">Transferase</keyword>
<keyword id="KW-0819">tRNA processing</keyword>
<keyword id="KW-0820">tRNA-binding</keyword>
<proteinExistence type="inferred from homology"/>
<accession>Q2A562</accession>
<comment type="function">
    <text evidence="1">Phosphorolytic 3'-5' exoribonuclease that plays an important role in tRNA 3'-end maturation. Removes nucleotide residues following the 3'-CCA terminus of tRNAs; can also add nucleotides to the ends of RNA molecules by using nucleoside diphosphates as substrates, but this may not be physiologically important. Probably plays a role in initiation of 16S rRNA degradation (leading to ribosome degradation) during starvation.</text>
</comment>
<comment type="catalytic activity">
    <reaction evidence="1">
        <text>tRNA(n+1) + phosphate = tRNA(n) + a ribonucleoside 5'-diphosphate</text>
        <dbReference type="Rhea" id="RHEA:10628"/>
        <dbReference type="Rhea" id="RHEA-COMP:17343"/>
        <dbReference type="Rhea" id="RHEA-COMP:17344"/>
        <dbReference type="ChEBI" id="CHEBI:43474"/>
        <dbReference type="ChEBI" id="CHEBI:57930"/>
        <dbReference type="ChEBI" id="CHEBI:173114"/>
        <dbReference type="EC" id="2.7.7.56"/>
    </reaction>
</comment>
<comment type="subunit">
    <text evidence="1">Homohexameric ring arranged as a trimer of dimers.</text>
</comment>
<comment type="similarity">
    <text evidence="1">Belongs to the RNase PH family.</text>
</comment>